<dbReference type="PIR" id="A01224">
    <property type="entry name" value="TITTOR"/>
</dbReference>
<dbReference type="SMR" id="P00993"/>
<dbReference type="MEROPS" id="I02.022"/>
<dbReference type="MEROPS" id="I17.004"/>
<dbReference type="GO" id="GO:0005576">
    <property type="term" value="C:extracellular region"/>
    <property type="evidence" value="ECO:0007669"/>
    <property type="project" value="InterPro"/>
</dbReference>
<dbReference type="GO" id="GO:0004867">
    <property type="term" value="F:serine-type endopeptidase inhibitor activity"/>
    <property type="evidence" value="ECO:0007669"/>
    <property type="project" value="UniProtKB-KW"/>
</dbReference>
<dbReference type="CDD" id="cd00109">
    <property type="entry name" value="Kunitz-type"/>
    <property type="match status" value="1"/>
</dbReference>
<dbReference type="CDD" id="cd00199">
    <property type="entry name" value="WAP"/>
    <property type="match status" value="1"/>
</dbReference>
<dbReference type="FunFam" id="4.10.410.10:FF:000015">
    <property type="entry name" value="WAP four-disulfide core domain 6A"/>
    <property type="match status" value="1"/>
</dbReference>
<dbReference type="Gene3D" id="4.10.75.10">
    <property type="entry name" value="Elafin-like"/>
    <property type="match status" value="1"/>
</dbReference>
<dbReference type="Gene3D" id="4.10.410.10">
    <property type="entry name" value="Pancreatic trypsin inhibitor Kunitz domain"/>
    <property type="match status" value="1"/>
</dbReference>
<dbReference type="InterPro" id="IPR036645">
    <property type="entry name" value="Elafin-like_sf"/>
</dbReference>
<dbReference type="InterPro" id="IPR002223">
    <property type="entry name" value="Kunitz_BPTI"/>
</dbReference>
<dbReference type="InterPro" id="IPR036880">
    <property type="entry name" value="Kunitz_BPTI_sf"/>
</dbReference>
<dbReference type="InterPro" id="IPR020901">
    <property type="entry name" value="Prtase_inh_Kunz-CS"/>
</dbReference>
<dbReference type="InterPro" id="IPR051388">
    <property type="entry name" value="Serpin_venom_toxin"/>
</dbReference>
<dbReference type="InterPro" id="IPR008197">
    <property type="entry name" value="WAP_dom"/>
</dbReference>
<dbReference type="PANTHER" id="PTHR46751">
    <property type="entry name" value="EPPIN"/>
    <property type="match status" value="1"/>
</dbReference>
<dbReference type="PANTHER" id="PTHR46751:SF1">
    <property type="entry name" value="WAP FOUR-DISULFIDE CORE DOMAIN PROTEIN 6A"/>
    <property type="match status" value="1"/>
</dbReference>
<dbReference type="Pfam" id="PF00014">
    <property type="entry name" value="Kunitz_BPTI"/>
    <property type="match status" value="1"/>
</dbReference>
<dbReference type="Pfam" id="PF00095">
    <property type="entry name" value="WAP"/>
    <property type="match status" value="1"/>
</dbReference>
<dbReference type="PRINTS" id="PR00003">
    <property type="entry name" value="4DISULPHCORE"/>
</dbReference>
<dbReference type="PRINTS" id="PR00759">
    <property type="entry name" value="BASICPTASE"/>
</dbReference>
<dbReference type="SMART" id="SM00131">
    <property type="entry name" value="KU"/>
    <property type="match status" value="1"/>
</dbReference>
<dbReference type="SMART" id="SM00217">
    <property type="entry name" value="WAP"/>
    <property type="match status" value="1"/>
</dbReference>
<dbReference type="SUPFAM" id="SSF57362">
    <property type="entry name" value="BPTI-like"/>
    <property type="match status" value="1"/>
</dbReference>
<dbReference type="SUPFAM" id="SSF57256">
    <property type="entry name" value="Elafin-like"/>
    <property type="match status" value="1"/>
</dbReference>
<dbReference type="PROSITE" id="PS00280">
    <property type="entry name" value="BPTI_KUNITZ_1"/>
    <property type="match status" value="1"/>
</dbReference>
<dbReference type="PROSITE" id="PS50279">
    <property type="entry name" value="BPTI_KUNITZ_2"/>
    <property type="match status" value="1"/>
</dbReference>
<dbReference type="PROSITE" id="PS51390">
    <property type="entry name" value="WAP"/>
    <property type="match status" value="1"/>
</dbReference>
<organism>
    <name type="scientific">Caretta caretta</name>
    <name type="common">Loggerhead sea turtle</name>
    <dbReference type="NCBI Taxonomy" id="8467"/>
    <lineage>
        <taxon>Eukaryota</taxon>
        <taxon>Metazoa</taxon>
        <taxon>Chordata</taxon>
        <taxon>Craniata</taxon>
        <taxon>Vertebrata</taxon>
        <taxon>Euteleostomi</taxon>
        <taxon>Archelosauria</taxon>
        <taxon>Testudinata</taxon>
        <taxon>Testudines</taxon>
        <taxon>Cryptodira</taxon>
        <taxon>Durocryptodira</taxon>
        <taxon>Americhelydia</taxon>
        <taxon>Chelonioidea</taxon>
        <taxon>Cheloniidae</taxon>
        <taxon>Caretta</taxon>
    </lineage>
</organism>
<sequence length="110" mass="11916">QGDKRDICRLPPEQGPCKGRIPRYFYNPASRMCESFIYGGCKGNKNNFKTKAECVRACRPPERPGVCPKTSGPGICLHGCDSDSDCKEGQKCCFDGCGYICLTVAPSGSP</sequence>
<comment type="function">
    <text>The first domain inhibits trypsin; the second one inhibitis subtilisin.</text>
</comment>
<comment type="caution">
    <text evidence="5">As the paper only indicates the species as 'red sea turtle', the species indicated here is therefore an inference.</text>
</comment>
<name>IBP_CARCR</name>
<keyword id="KW-0903">Direct protein sequencing</keyword>
<keyword id="KW-1015">Disulfide bond</keyword>
<keyword id="KW-0646">Protease inhibitor</keyword>
<keyword id="KW-0873">Pyrrolidone carboxylic acid</keyword>
<keyword id="KW-0722">Serine protease inhibitor</keyword>
<reference key="1">
    <citation type="journal article" date="1979" name="Fed. Proc.">
        <title>Trypsin-subtilisin inhibitor from red sea turtle eggwhite consists of two tandem domains -- one Kunitz -- one of a new family.</title>
        <authorList>
            <person name="Kato I."/>
            <person name="Tominaga N."/>
        </authorList>
    </citation>
    <scope>PROTEIN SEQUENCE</scope>
    <scope>PYROGLUTAMATE FORMATION AT GLN-1</scope>
    <source>
        <tissue>Egg white</tissue>
    </source>
</reference>
<protein>
    <recommendedName>
        <fullName>Chelonianin</fullName>
    </recommendedName>
    <alternativeName>
        <fullName>Basic protease inhibitor</fullName>
    </alternativeName>
    <alternativeName>
        <fullName>RTPI</fullName>
    </alternativeName>
</protein>
<proteinExistence type="evidence at protein level"/>
<accession>P00993</accession>
<feature type="chain" id="PRO_0000155409" description="Chelonianin">
    <location>
        <begin position="1"/>
        <end position="110"/>
    </location>
</feature>
<feature type="domain" description="BPTI/Kunitz inhibitor" evidence="2">
    <location>
        <begin position="8"/>
        <end position="58"/>
    </location>
</feature>
<feature type="domain" description="WAP" evidence="3">
    <location>
        <begin position="60"/>
        <end position="105"/>
    </location>
</feature>
<feature type="site" description="Reactive bond for trypsin">
    <location>
        <begin position="18"/>
        <end position="19"/>
    </location>
</feature>
<feature type="modified residue" description="Pyrrolidone carboxylic acid" evidence="4">
    <location>
        <position position="1"/>
    </location>
</feature>
<feature type="disulfide bond" evidence="1">
    <location>
        <begin position="8"/>
        <end position="58"/>
    </location>
</feature>
<feature type="disulfide bond" evidence="1">
    <location>
        <begin position="17"/>
        <end position="41"/>
    </location>
</feature>
<feature type="disulfide bond" evidence="1">
    <location>
        <begin position="33"/>
        <end position="54"/>
    </location>
</feature>
<feature type="disulfide bond" evidence="1">
    <location>
        <begin position="67"/>
        <end position="92"/>
    </location>
</feature>
<feature type="disulfide bond" evidence="1">
    <location>
        <begin position="76"/>
        <end position="97"/>
    </location>
</feature>
<feature type="disulfide bond" evidence="1">
    <location>
        <begin position="80"/>
        <end position="93"/>
    </location>
</feature>
<feature type="disulfide bond" evidence="1">
    <location>
        <begin position="86"/>
        <end position="101"/>
    </location>
</feature>
<evidence type="ECO:0000250" key="1"/>
<evidence type="ECO:0000255" key="2">
    <source>
        <dbReference type="PROSITE-ProRule" id="PRU00031"/>
    </source>
</evidence>
<evidence type="ECO:0000255" key="3">
    <source>
        <dbReference type="PROSITE-ProRule" id="PRU00722"/>
    </source>
</evidence>
<evidence type="ECO:0000269" key="4">
    <source ref="1"/>
</evidence>
<evidence type="ECO:0000305" key="5"/>